<proteinExistence type="inferred from homology"/>
<sequence>MVQRLKTVYEQEVIKQLMTRFQYKNIHEVPKLKKITVNRGLGEAAQNAKILEASVKEITEITGQKAIVTRAKKAIAGFKLRQDMPIGVMVTLRGDYMYAFLDRLINLSLPRIRDFRGITAKSFDGRGNYNLGLKEQLIFPEVDYDGIEQIRGMDISIVTTAKTDQEGLALLKSLGMPFAES</sequence>
<feature type="chain" id="PRO_0000125034" description="Large ribosomal subunit protein uL5c">
    <location>
        <begin position="1"/>
        <end position="181"/>
    </location>
</feature>
<feature type="sequence conflict" description="In Ref. 1; CAA34548." evidence="2" ref="1">
    <original>G</original>
    <variation>S</variation>
    <location>
        <position position="146"/>
    </location>
</feature>
<feature type="sequence conflict" description="In Ref. 1; CAA34548." evidence="2" ref="1">
    <original>D</original>
    <variation>N</variation>
    <location>
        <position position="164"/>
    </location>
</feature>
<name>RK5_CYAPA</name>
<accession>P14807</accession>
<comment type="function">
    <text evidence="1">Binds 5S rRNA, forms part of the central protuberance of the 50S subunit.</text>
</comment>
<comment type="subunit">
    <text evidence="1">Part of the 50S ribosomal subunit; contacts the 5S rRNA.</text>
</comment>
<comment type="subcellular location">
    <subcellularLocation>
        <location>Plastid</location>
        <location>Cyanelle</location>
    </subcellularLocation>
</comment>
<comment type="similarity">
    <text evidence="2">Belongs to the universal ribosomal protein uL5 family.</text>
</comment>
<dbReference type="EMBL" id="M30487">
    <property type="protein sequence ID" value="AAA63625.1"/>
    <property type="molecule type" value="Genomic_DNA"/>
</dbReference>
<dbReference type="EMBL" id="X16548">
    <property type="protein sequence ID" value="CAA34548.1"/>
    <property type="molecule type" value="Genomic_DNA"/>
</dbReference>
<dbReference type="EMBL" id="U30821">
    <property type="protein sequence ID" value="AAA81223.1"/>
    <property type="molecule type" value="Genomic_DNA"/>
</dbReference>
<dbReference type="PIR" id="T06880">
    <property type="entry name" value="R5KT5"/>
</dbReference>
<dbReference type="RefSeq" id="NP_043192.1">
    <property type="nucleotide sequence ID" value="NC_001675.1"/>
</dbReference>
<dbReference type="SMR" id="P14807"/>
<dbReference type="GeneID" id="801524"/>
<dbReference type="GO" id="GO:0009842">
    <property type="term" value="C:cyanelle"/>
    <property type="evidence" value="ECO:0007669"/>
    <property type="project" value="UniProtKB-SubCell"/>
</dbReference>
<dbReference type="GO" id="GO:1990904">
    <property type="term" value="C:ribonucleoprotein complex"/>
    <property type="evidence" value="ECO:0007669"/>
    <property type="project" value="UniProtKB-KW"/>
</dbReference>
<dbReference type="GO" id="GO:0005840">
    <property type="term" value="C:ribosome"/>
    <property type="evidence" value="ECO:0007669"/>
    <property type="project" value="UniProtKB-KW"/>
</dbReference>
<dbReference type="GO" id="GO:0019843">
    <property type="term" value="F:rRNA binding"/>
    <property type="evidence" value="ECO:0007669"/>
    <property type="project" value="UniProtKB-KW"/>
</dbReference>
<dbReference type="GO" id="GO:0003735">
    <property type="term" value="F:structural constituent of ribosome"/>
    <property type="evidence" value="ECO:0007669"/>
    <property type="project" value="InterPro"/>
</dbReference>
<dbReference type="GO" id="GO:0006412">
    <property type="term" value="P:translation"/>
    <property type="evidence" value="ECO:0007669"/>
    <property type="project" value="InterPro"/>
</dbReference>
<dbReference type="FunFam" id="3.30.1440.10:FF:000001">
    <property type="entry name" value="50S ribosomal protein L5"/>
    <property type="match status" value="1"/>
</dbReference>
<dbReference type="Gene3D" id="3.30.1440.10">
    <property type="match status" value="1"/>
</dbReference>
<dbReference type="HAMAP" id="MF_01333_B">
    <property type="entry name" value="Ribosomal_uL5_B"/>
    <property type="match status" value="1"/>
</dbReference>
<dbReference type="InterPro" id="IPR002132">
    <property type="entry name" value="Ribosomal_uL5"/>
</dbReference>
<dbReference type="InterPro" id="IPR020930">
    <property type="entry name" value="Ribosomal_uL5_bac-type"/>
</dbReference>
<dbReference type="InterPro" id="IPR031309">
    <property type="entry name" value="Ribosomal_uL5_C"/>
</dbReference>
<dbReference type="InterPro" id="IPR020929">
    <property type="entry name" value="Ribosomal_uL5_CS"/>
</dbReference>
<dbReference type="InterPro" id="IPR022803">
    <property type="entry name" value="Ribosomal_uL5_dom_sf"/>
</dbReference>
<dbReference type="InterPro" id="IPR031310">
    <property type="entry name" value="Ribosomal_uL5_N"/>
</dbReference>
<dbReference type="NCBIfam" id="NF000585">
    <property type="entry name" value="PRK00010.1"/>
    <property type="match status" value="1"/>
</dbReference>
<dbReference type="PANTHER" id="PTHR11994">
    <property type="entry name" value="60S RIBOSOMAL PROTEIN L11-RELATED"/>
    <property type="match status" value="1"/>
</dbReference>
<dbReference type="Pfam" id="PF00281">
    <property type="entry name" value="Ribosomal_L5"/>
    <property type="match status" value="1"/>
</dbReference>
<dbReference type="Pfam" id="PF00673">
    <property type="entry name" value="Ribosomal_L5_C"/>
    <property type="match status" value="1"/>
</dbReference>
<dbReference type="PIRSF" id="PIRSF002161">
    <property type="entry name" value="Ribosomal_L5"/>
    <property type="match status" value="1"/>
</dbReference>
<dbReference type="SUPFAM" id="SSF55282">
    <property type="entry name" value="RL5-like"/>
    <property type="match status" value="1"/>
</dbReference>
<dbReference type="PROSITE" id="PS00358">
    <property type="entry name" value="RIBOSOMAL_L5"/>
    <property type="match status" value="1"/>
</dbReference>
<protein>
    <recommendedName>
        <fullName evidence="2">Large ribosomal subunit protein uL5c</fullName>
    </recommendedName>
    <alternativeName>
        <fullName>50S ribosomal protein L5, cyanelle</fullName>
    </alternativeName>
</protein>
<geneLocation type="cyanelle"/>
<organism>
    <name type="scientific">Cyanophora paradoxa</name>
    <dbReference type="NCBI Taxonomy" id="2762"/>
    <lineage>
        <taxon>Eukaryota</taxon>
        <taxon>Glaucocystophyceae</taxon>
        <taxon>Cyanophoraceae</taxon>
        <taxon>Cyanophora</taxon>
    </lineage>
</organism>
<keyword id="KW-0194">Cyanelle</keyword>
<keyword id="KW-0934">Plastid</keyword>
<keyword id="KW-0687">Ribonucleoprotein</keyword>
<keyword id="KW-0689">Ribosomal protein</keyword>
<keyword id="KW-0694">RNA-binding</keyword>
<keyword id="KW-0699">rRNA-binding</keyword>
<reference key="1">
    <citation type="journal article" date="1990" name="FEBS Lett.">
        <title>The cyanelle genome of Cyanophora paradoxa encodes ribosomal proteins not encoded by the chloroplasts genomes of higher plants.</title>
        <authorList>
            <person name="Bryant D.A."/>
            <person name="Stirewalt V.L."/>
        </authorList>
    </citation>
    <scope>NUCLEOTIDE SEQUENCE [GENOMIC DNA]</scope>
    <source>
        <strain>UTEX LB 555 / Pringsheim</strain>
    </source>
</reference>
<reference key="2">
    <citation type="journal article" date="1990" name="Mol. Gen. Genet.">
        <title>The cyanelle S10 spc ribosomal protein gene operon from Cyanophora paradoxa.</title>
        <authorList>
            <person name="Michalowski C.B."/>
            <person name="Pfanzagl B."/>
            <person name="Loeffelhardt W."/>
            <person name="Bohnert H.J."/>
        </authorList>
    </citation>
    <scope>NUCLEOTIDE SEQUENCE [GENOMIC DNA]</scope>
    <source>
        <strain>UTEX 5550</strain>
    </source>
</reference>
<reference key="3">
    <citation type="journal article" date="1995" name="Plant Mol. Biol. Rep.">
        <title>Nucleotide sequence of the cyanelle DNA from Cyanophora paradoxa.</title>
        <authorList>
            <person name="Stirewalt V.L."/>
            <person name="Michalowski C.B."/>
            <person name="Loeffelhardt W."/>
            <person name="Bohnert H.J."/>
            <person name="Bryant D.A."/>
        </authorList>
    </citation>
    <scope>NUCLEOTIDE SEQUENCE [LARGE SCALE GENOMIC DNA]</scope>
    <source>
        <strain>UTEX LB 555 / Pringsheim</strain>
    </source>
</reference>
<reference key="4">
    <citation type="book" date="1997" name="Eukaryotism and symbiosis">
        <title>The complete sequence of the cyanelle genome of Cyanophora paradoxa: the genetic complexity of a primitive plastid.</title>
        <editorList>
            <person name="Schenk H.E.A."/>
            <person name="Herrmann R."/>
            <person name="Jeon K.W."/>
            <person name="Mueller N.E."/>
            <person name="Schwemmler W."/>
        </editorList>
        <authorList>
            <person name="Loeffelhardt W."/>
            <person name="Stirewalt V.L."/>
            <person name="Michalowski C.B."/>
            <person name="Annarella M."/>
            <person name="Farley J.Y."/>
            <person name="Schluchter W.M."/>
            <person name="Chung S."/>
            <person name="Newmann-Spallart C."/>
            <person name="Steiner J.M."/>
            <person name="Jakowitsch J."/>
            <person name="Bohnert H.J."/>
            <person name="Bryant D.A."/>
        </authorList>
    </citation>
    <scope>NUCLEOTIDE SEQUENCE [LARGE SCALE GENOMIC DNA]</scope>
    <source>
        <strain>UTEX LB 555 / Pringsheim</strain>
    </source>
</reference>
<gene>
    <name type="primary">rpl5</name>
</gene>
<evidence type="ECO:0000250" key="1"/>
<evidence type="ECO:0000305" key="2"/>